<accession>Q5UPL6</accession>
<organismHost>
    <name type="scientific">Acanthamoeba polyphaga</name>
    <name type="common">Amoeba</name>
    <dbReference type="NCBI Taxonomy" id="5757"/>
</organismHost>
<comment type="similarity">
    <text evidence="2">Belongs to the mimivirus BTB/WD family.</text>
</comment>
<evidence type="ECO:0000255" key="1">
    <source>
        <dbReference type="PROSITE-ProRule" id="PRU00037"/>
    </source>
</evidence>
<evidence type="ECO:0000305" key="2"/>
<keyword id="KW-1185">Reference proteome</keyword>
<keyword id="KW-0677">Repeat</keyword>
<keyword id="KW-0853">WD repeat</keyword>
<sequence length="468" mass="54628">MDNLKVLFEENLFSDLQLIVEDSNESIVLNVHRNILYFSCDFFKKLLIGQFSETNDKSIKIIVHNAKITSCVIKNFYGIDDKLPEYPDWMYYLETYRCYDYFGMKIPVDKLLELTVPSEGFELLLQIVDLLDYCDELGHLIIRNLPLDYDINDLSKDFVTDLQRLSNEYQIICTKHHTIKIFNNKLYKPIKTIHHSENITSLCYDNNNKRIIYGDLKGTIYAYDFFSNKIIFNLQNIQTNKTLPNNVIHLAIINDKLISVYFDGKITVRNSLDGTLCYVIKLIENPFLFKVCPHTNCIFHFNTHGFTNVWSIDTGNLIHKLSQFTNTMFNTLKNDLIIFWRENNLILCNYPSMDEIGTLCKEYSFPPLVLLNKQHILVGCHNGLMDIWNLKKLTLVKSTQLFDVPIISMTYSPNGDQLIVANCDREVRILNSDNYEIIYTKNINKDNNNKLLTISLHDAEKIEKLNIL</sequence>
<proteinExistence type="inferred from homology"/>
<dbReference type="EMBL" id="AY653733">
    <property type="protein sequence ID" value="AAV50429.1"/>
    <property type="molecule type" value="Genomic_DNA"/>
</dbReference>
<dbReference type="SMR" id="Q5UPL6"/>
<dbReference type="KEGG" id="vg:9924754"/>
<dbReference type="OrthoDB" id="33486at10239"/>
<dbReference type="Proteomes" id="UP000001134">
    <property type="component" value="Genome"/>
</dbReference>
<dbReference type="GO" id="GO:0003723">
    <property type="term" value="F:RNA binding"/>
    <property type="evidence" value="ECO:0007669"/>
    <property type="project" value="TreeGrafter"/>
</dbReference>
<dbReference type="CDD" id="cd18186">
    <property type="entry name" value="BTB_POZ_ZBTB_KLHL-like"/>
    <property type="match status" value="1"/>
</dbReference>
<dbReference type="Gene3D" id="3.30.710.10">
    <property type="entry name" value="Potassium Channel Kv1.1, Chain A"/>
    <property type="match status" value="1"/>
</dbReference>
<dbReference type="Gene3D" id="2.130.10.10">
    <property type="entry name" value="YVTN repeat-like/Quinoprotein amine dehydrogenase"/>
    <property type="match status" value="2"/>
</dbReference>
<dbReference type="InterPro" id="IPR000210">
    <property type="entry name" value="BTB/POZ_dom"/>
</dbReference>
<dbReference type="InterPro" id="IPR011333">
    <property type="entry name" value="SKP1/BTB/POZ_sf"/>
</dbReference>
<dbReference type="InterPro" id="IPR052234">
    <property type="entry name" value="U5_snRNP_Component"/>
</dbReference>
<dbReference type="InterPro" id="IPR015943">
    <property type="entry name" value="WD40/YVTN_repeat-like_dom_sf"/>
</dbReference>
<dbReference type="InterPro" id="IPR036322">
    <property type="entry name" value="WD40_repeat_dom_sf"/>
</dbReference>
<dbReference type="InterPro" id="IPR001680">
    <property type="entry name" value="WD40_rpt"/>
</dbReference>
<dbReference type="PANTHER" id="PTHR44006">
    <property type="entry name" value="U5 SMALL NUCLEAR RIBONUCLEOPROTEIN 40 KDA PROTEIN"/>
    <property type="match status" value="1"/>
</dbReference>
<dbReference type="PANTHER" id="PTHR44006:SF1">
    <property type="entry name" value="U5 SMALL NUCLEAR RIBONUCLEOPROTEIN 40 KDA PROTEIN"/>
    <property type="match status" value="1"/>
</dbReference>
<dbReference type="Pfam" id="PF00651">
    <property type="entry name" value="BTB"/>
    <property type="match status" value="1"/>
</dbReference>
<dbReference type="Pfam" id="PF00400">
    <property type="entry name" value="WD40"/>
    <property type="match status" value="1"/>
</dbReference>
<dbReference type="SMART" id="SM00320">
    <property type="entry name" value="WD40"/>
    <property type="match status" value="3"/>
</dbReference>
<dbReference type="SUPFAM" id="SSF54695">
    <property type="entry name" value="POZ domain"/>
    <property type="match status" value="1"/>
</dbReference>
<dbReference type="SUPFAM" id="SSF50978">
    <property type="entry name" value="WD40 repeat-like"/>
    <property type="match status" value="1"/>
</dbReference>
<dbReference type="PROSITE" id="PS50097">
    <property type="entry name" value="BTB"/>
    <property type="match status" value="1"/>
</dbReference>
<dbReference type="PROSITE" id="PS50294">
    <property type="entry name" value="WD_REPEATS_REGION"/>
    <property type="match status" value="1"/>
</dbReference>
<name>YR154_MIMIV</name>
<gene>
    <name type="ordered locus">MIMI_R154</name>
</gene>
<reference key="1">
    <citation type="journal article" date="2004" name="Science">
        <title>The 1.2-megabase genome sequence of Mimivirus.</title>
        <authorList>
            <person name="Raoult D."/>
            <person name="Audic S."/>
            <person name="Robert C."/>
            <person name="Abergel C."/>
            <person name="Renesto P."/>
            <person name="Ogata H."/>
            <person name="La Scola B."/>
            <person name="Susan M."/>
            <person name="Claverie J.-M."/>
        </authorList>
    </citation>
    <scope>NUCLEOTIDE SEQUENCE [LARGE SCALE GENOMIC DNA]</scope>
    <source>
        <strain>Rowbotham-Bradford</strain>
    </source>
</reference>
<protein>
    <recommendedName>
        <fullName>Putative BTB/POZ domain and WD-repeat protein R154</fullName>
    </recommendedName>
</protein>
<organism>
    <name type="scientific">Acanthamoeba polyphaga mimivirus</name>
    <name type="common">APMV</name>
    <dbReference type="NCBI Taxonomy" id="212035"/>
    <lineage>
        <taxon>Viruses</taxon>
        <taxon>Varidnaviria</taxon>
        <taxon>Bamfordvirae</taxon>
        <taxon>Nucleocytoviricota</taxon>
        <taxon>Megaviricetes</taxon>
        <taxon>Imitervirales</taxon>
        <taxon>Mimiviridae</taxon>
        <taxon>Megamimivirinae</taxon>
        <taxon>Mimivirus</taxon>
        <taxon>Mimivirus bradfordmassiliense</taxon>
    </lineage>
</organism>
<feature type="chain" id="PRO_0000186241" description="Putative BTB/POZ domain and WD-repeat protein R154">
    <location>
        <begin position="1"/>
        <end position="468"/>
    </location>
</feature>
<feature type="domain" description="BTB" evidence="1">
    <location>
        <begin position="14"/>
        <end position="85"/>
    </location>
</feature>
<feature type="repeat" description="WD 1">
    <location>
        <begin position="194"/>
        <end position="233"/>
    </location>
</feature>
<feature type="repeat" description="WD 2">
    <location>
        <begin position="354"/>
        <end position="398"/>
    </location>
</feature>
<feature type="repeat" description="WD 3">
    <location>
        <begin position="401"/>
        <end position="440"/>
    </location>
</feature>